<organism>
    <name type="scientific">Yersinia enterocolitica serotype O:8 / biotype 1B (strain NCTC 13174 / 8081)</name>
    <dbReference type="NCBI Taxonomy" id="393305"/>
    <lineage>
        <taxon>Bacteria</taxon>
        <taxon>Pseudomonadati</taxon>
        <taxon>Pseudomonadota</taxon>
        <taxon>Gammaproteobacteria</taxon>
        <taxon>Enterobacterales</taxon>
        <taxon>Yersiniaceae</taxon>
        <taxon>Yersinia</taxon>
    </lineage>
</organism>
<proteinExistence type="inferred from homology"/>
<reference key="1">
    <citation type="journal article" date="2006" name="PLoS Genet.">
        <title>The complete genome sequence and comparative genome analysis of the high pathogenicity Yersinia enterocolitica strain 8081.</title>
        <authorList>
            <person name="Thomson N.R."/>
            <person name="Howard S."/>
            <person name="Wren B.W."/>
            <person name="Holden M.T.G."/>
            <person name="Crossman L."/>
            <person name="Challis G.L."/>
            <person name="Churcher C."/>
            <person name="Mungall K."/>
            <person name="Brooks K."/>
            <person name="Chillingworth T."/>
            <person name="Feltwell T."/>
            <person name="Abdellah Z."/>
            <person name="Hauser H."/>
            <person name="Jagels K."/>
            <person name="Maddison M."/>
            <person name="Moule S."/>
            <person name="Sanders M."/>
            <person name="Whitehead S."/>
            <person name="Quail M.A."/>
            <person name="Dougan G."/>
            <person name="Parkhill J."/>
            <person name="Prentice M.B."/>
        </authorList>
    </citation>
    <scope>NUCLEOTIDE SEQUENCE [LARGE SCALE GENOMIC DNA]</scope>
    <source>
        <strain>NCTC 13174 / 8081</strain>
    </source>
</reference>
<gene>
    <name evidence="1" type="primary">secA</name>
    <name type="ordered locus">YE0681</name>
</gene>
<accession>A1JJK2</accession>
<comment type="function">
    <text evidence="1">Part of the Sec protein translocase complex. Interacts with the SecYEG preprotein conducting channel. Has a central role in coupling the hydrolysis of ATP to the transfer of proteins into and across the cell membrane, serving both as a receptor for the preprotein-SecB complex and as an ATP-driven molecular motor driving the stepwise translocation of polypeptide chains across the membrane.</text>
</comment>
<comment type="catalytic activity">
    <reaction evidence="1">
        <text>ATP + H2O + cellular proteinSide 1 = ADP + phosphate + cellular proteinSide 2.</text>
        <dbReference type="EC" id="7.4.2.8"/>
    </reaction>
</comment>
<comment type="cofactor">
    <cofactor evidence="1">
        <name>Zn(2+)</name>
        <dbReference type="ChEBI" id="CHEBI:29105"/>
    </cofactor>
    <text evidence="1">May bind 1 zinc ion per subunit.</text>
</comment>
<comment type="subunit">
    <text evidence="1">Monomer and homodimer. Part of the essential Sec protein translocation apparatus which comprises SecA, SecYEG and auxiliary proteins SecDF-YajC and YidC.</text>
</comment>
<comment type="subcellular location">
    <subcellularLocation>
        <location evidence="1">Cell inner membrane</location>
        <topology evidence="1">Peripheral membrane protein</topology>
        <orientation evidence="1">Cytoplasmic side</orientation>
    </subcellularLocation>
    <subcellularLocation>
        <location evidence="1">Cytoplasm</location>
    </subcellularLocation>
    <text evidence="1">Distribution is 50-50.</text>
</comment>
<comment type="induction">
    <text evidence="1">Repressed under conditions of excess protein secretion capacity and derepressed when protein secretion becomes limiting. This is regulated by SecM.</text>
</comment>
<comment type="similarity">
    <text evidence="1">Belongs to the SecA family.</text>
</comment>
<evidence type="ECO:0000255" key="1">
    <source>
        <dbReference type="HAMAP-Rule" id="MF_01382"/>
    </source>
</evidence>
<evidence type="ECO:0000256" key="2">
    <source>
        <dbReference type="SAM" id="MobiDB-lite"/>
    </source>
</evidence>
<name>SECA_YERE8</name>
<dbReference type="EC" id="7.4.2.8" evidence="1"/>
<dbReference type="EMBL" id="AM286415">
    <property type="protein sequence ID" value="CAL10790.1"/>
    <property type="molecule type" value="Genomic_DNA"/>
</dbReference>
<dbReference type="RefSeq" id="WP_005167086.1">
    <property type="nucleotide sequence ID" value="NC_008800.1"/>
</dbReference>
<dbReference type="RefSeq" id="YP_001005030.1">
    <property type="nucleotide sequence ID" value="NC_008800.1"/>
</dbReference>
<dbReference type="BMRB" id="A1JJK2"/>
<dbReference type="SMR" id="A1JJK2"/>
<dbReference type="KEGG" id="yen:YE0681"/>
<dbReference type="PATRIC" id="fig|393305.7.peg.776"/>
<dbReference type="eggNOG" id="COG0653">
    <property type="taxonomic scope" value="Bacteria"/>
</dbReference>
<dbReference type="HOGENOM" id="CLU_005314_3_0_6"/>
<dbReference type="OrthoDB" id="9805579at2"/>
<dbReference type="Proteomes" id="UP000000642">
    <property type="component" value="Chromosome"/>
</dbReference>
<dbReference type="GO" id="GO:0031522">
    <property type="term" value="C:cell envelope Sec protein transport complex"/>
    <property type="evidence" value="ECO:0007669"/>
    <property type="project" value="TreeGrafter"/>
</dbReference>
<dbReference type="GO" id="GO:0005829">
    <property type="term" value="C:cytosol"/>
    <property type="evidence" value="ECO:0007669"/>
    <property type="project" value="TreeGrafter"/>
</dbReference>
<dbReference type="GO" id="GO:0005886">
    <property type="term" value="C:plasma membrane"/>
    <property type="evidence" value="ECO:0007669"/>
    <property type="project" value="UniProtKB-SubCell"/>
</dbReference>
<dbReference type="GO" id="GO:0005524">
    <property type="term" value="F:ATP binding"/>
    <property type="evidence" value="ECO:0007669"/>
    <property type="project" value="UniProtKB-UniRule"/>
</dbReference>
<dbReference type="GO" id="GO:0046872">
    <property type="term" value="F:metal ion binding"/>
    <property type="evidence" value="ECO:0007669"/>
    <property type="project" value="UniProtKB-KW"/>
</dbReference>
<dbReference type="GO" id="GO:0008564">
    <property type="term" value="F:protein-exporting ATPase activity"/>
    <property type="evidence" value="ECO:0007669"/>
    <property type="project" value="UniProtKB-EC"/>
</dbReference>
<dbReference type="GO" id="GO:0065002">
    <property type="term" value="P:intracellular protein transmembrane transport"/>
    <property type="evidence" value="ECO:0007669"/>
    <property type="project" value="UniProtKB-UniRule"/>
</dbReference>
<dbReference type="GO" id="GO:0017038">
    <property type="term" value="P:protein import"/>
    <property type="evidence" value="ECO:0007669"/>
    <property type="project" value="InterPro"/>
</dbReference>
<dbReference type="GO" id="GO:0006605">
    <property type="term" value="P:protein targeting"/>
    <property type="evidence" value="ECO:0007669"/>
    <property type="project" value="UniProtKB-UniRule"/>
</dbReference>
<dbReference type="GO" id="GO:0043952">
    <property type="term" value="P:protein transport by the Sec complex"/>
    <property type="evidence" value="ECO:0007669"/>
    <property type="project" value="TreeGrafter"/>
</dbReference>
<dbReference type="CDD" id="cd17928">
    <property type="entry name" value="DEXDc_SecA"/>
    <property type="match status" value="1"/>
</dbReference>
<dbReference type="CDD" id="cd18803">
    <property type="entry name" value="SF2_C_secA"/>
    <property type="match status" value="1"/>
</dbReference>
<dbReference type="FunFam" id="1.10.3060.10:FF:000001">
    <property type="entry name" value="Preprotein translocase subunit SecA"/>
    <property type="match status" value="1"/>
</dbReference>
<dbReference type="FunFam" id="3.40.50.300:FF:000081">
    <property type="entry name" value="Preprotein translocase subunit SecA"/>
    <property type="match status" value="1"/>
</dbReference>
<dbReference type="FunFam" id="3.40.50.300:FF:000113">
    <property type="entry name" value="Preprotein translocase subunit SecA"/>
    <property type="match status" value="1"/>
</dbReference>
<dbReference type="FunFam" id="3.90.1440.10:FF:000001">
    <property type="entry name" value="Preprotein translocase subunit SecA"/>
    <property type="match status" value="1"/>
</dbReference>
<dbReference type="Gene3D" id="1.10.3060.10">
    <property type="entry name" value="Helical scaffold and wing domains of SecA"/>
    <property type="match status" value="1"/>
</dbReference>
<dbReference type="Gene3D" id="3.40.50.300">
    <property type="entry name" value="P-loop containing nucleotide triphosphate hydrolases"/>
    <property type="match status" value="2"/>
</dbReference>
<dbReference type="Gene3D" id="3.90.1440.10">
    <property type="entry name" value="SecA, preprotein cross-linking domain"/>
    <property type="match status" value="1"/>
</dbReference>
<dbReference type="HAMAP" id="MF_01382">
    <property type="entry name" value="SecA"/>
    <property type="match status" value="1"/>
</dbReference>
<dbReference type="InterPro" id="IPR014001">
    <property type="entry name" value="Helicase_ATP-bd"/>
</dbReference>
<dbReference type="InterPro" id="IPR027417">
    <property type="entry name" value="P-loop_NTPase"/>
</dbReference>
<dbReference type="InterPro" id="IPR004027">
    <property type="entry name" value="SEC_C_motif"/>
</dbReference>
<dbReference type="InterPro" id="IPR000185">
    <property type="entry name" value="SecA"/>
</dbReference>
<dbReference type="InterPro" id="IPR020937">
    <property type="entry name" value="SecA_CS"/>
</dbReference>
<dbReference type="InterPro" id="IPR011115">
    <property type="entry name" value="SecA_DEAD"/>
</dbReference>
<dbReference type="InterPro" id="IPR014018">
    <property type="entry name" value="SecA_motor_DEAD"/>
</dbReference>
<dbReference type="InterPro" id="IPR011130">
    <property type="entry name" value="SecA_preprotein_X-link_dom"/>
</dbReference>
<dbReference type="InterPro" id="IPR044722">
    <property type="entry name" value="SecA_SF2_C"/>
</dbReference>
<dbReference type="InterPro" id="IPR011116">
    <property type="entry name" value="SecA_Wing/Scaffold"/>
</dbReference>
<dbReference type="InterPro" id="IPR036266">
    <property type="entry name" value="SecA_Wing/Scaffold_sf"/>
</dbReference>
<dbReference type="InterPro" id="IPR036670">
    <property type="entry name" value="SecA_X-link_sf"/>
</dbReference>
<dbReference type="NCBIfam" id="NF009538">
    <property type="entry name" value="PRK12904.1"/>
    <property type="match status" value="1"/>
</dbReference>
<dbReference type="NCBIfam" id="TIGR00963">
    <property type="entry name" value="secA"/>
    <property type="match status" value="1"/>
</dbReference>
<dbReference type="PANTHER" id="PTHR30612:SF0">
    <property type="entry name" value="CHLOROPLAST PROTEIN-TRANSPORTING ATPASE"/>
    <property type="match status" value="1"/>
</dbReference>
<dbReference type="PANTHER" id="PTHR30612">
    <property type="entry name" value="SECA INNER MEMBRANE COMPONENT OF SEC PROTEIN SECRETION SYSTEM"/>
    <property type="match status" value="1"/>
</dbReference>
<dbReference type="Pfam" id="PF21090">
    <property type="entry name" value="P-loop_SecA"/>
    <property type="match status" value="1"/>
</dbReference>
<dbReference type="Pfam" id="PF02810">
    <property type="entry name" value="SEC-C"/>
    <property type="match status" value="1"/>
</dbReference>
<dbReference type="Pfam" id="PF07517">
    <property type="entry name" value="SecA_DEAD"/>
    <property type="match status" value="1"/>
</dbReference>
<dbReference type="Pfam" id="PF01043">
    <property type="entry name" value="SecA_PP_bind"/>
    <property type="match status" value="1"/>
</dbReference>
<dbReference type="Pfam" id="PF07516">
    <property type="entry name" value="SecA_SW"/>
    <property type="match status" value="1"/>
</dbReference>
<dbReference type="PRINTS" id="PR00906">
    <property type="entry name" value="SECA"/>
</dbReference>
<dbReference type="SMART" id="SM00957">
    <property type="entry name" value="SecA_DEAD"/>
    <property type="match status" value="1"/>
</dbReference>
<dbReference type="SMART" id="SM00958">
    <property type="entry name" value="SecA_PP_bind"/>
    <property type="match status" value="1"/>
</dbReference>
<dbReference type="SUPFAM" id="SSF81886">
    <property type="entry name" value="Helical scaffold and wing domains of SecA"/>
    <property type="match status" value="1"/>
</dbReference>
<dbReference type="SUPFAM" id="SSF52540">
    <property type="entry name" value="P-loop containing nucleoside triphosphate hydrolases"/>
    <property type="match status" value="2"/>
</dbReference>
<dbReference type="SUPFAM" id="SSF81767">
    <property type="entry name" value="Pre-protein crosslinking domain of SecA"/>
    <property type="match status" value="1"/>
</dbReference>
<dbReference type="PROSITE" id="PS01312">
    <property type="entry name" value="SECA"/>
    <property type="match status" value="1"/>
</dbReference>
<dbReference type="PROSITE" id="PS51196">
    <property type="entry name" value="SECA_MOTOR_DEAD"/>
    <property type="match status" value="1"/>
</dbReference>
<keyword id="KW-0067">ATP-binding</keyword>
<keyword id="KW-0997">Cell inner membrane</keyword>
<keyword id="KW-1003">Cell membrane</keyword>
<keyword id="KW-0963">Cytoplasm</keyword>
<keyword id="KW-0472">Membrane</keyword>
<keyword id="KW-0479">Metal-binding</keyword>
<keyword id="KW-0547">Nucleotide-binding</keyword>
<keyword id="KW-0653">Protein transport</keyword>
<keyword id="KW-1278">Translocase</keyword>
<keyword id="KW-0811">Translocation</keyword>
<keyword id="KW-0813">Transport</keyword>
<keyword id="KW-0862">Zinc</keyword>
<feature type="chain" id="PRO_0000321050" description="Protein translocase subunit SecA">
    <location>
        <begin position="1"/>
        <end position="904"/>
    </location>
</feature>
<feature type="region of interest" description="Disordered" evidence="2">
    <location>
        <begin position="851"/>
        <end position="904"/>
    </location>
</feature>
<feature type="compositionally biased region" description="Polar residues" evidence="2">
    <location>
        <begin position="853"/>
        <end position="871"/>
    </location>
</feature>
<feature type="compositionally biased region" description="Basic residues" evidence="2">
    <location>
        <begin position="894"/>
        <end position="904"/>
    </location>
</feature>
<feature type="binding site" evidence="1">
    <location>
        <position position="87"/>
    </location>
    <ligand>
        <name>ATP</name>
        <dbReference type="ChEBI" id="CHEBI:30616"/>
    </ligand>
</feature>
<feature type="binding site" evidence="1">
    <location>
        <begin position="105"/>
        <end position="109"/>
    </location>
    <ligand>
        <name>ATP</name>
        <dbReference type="ChEBI" id="CHEBI:30616"/>
    </ligand>
</feature>
<feature type="binding site" evidence="1">
    <location>
        <position position="512"/>
    </location>
    <ligand>
        <name>ATP</name>
        <dbReference type="ChEBI" id="CHEBI:30616"/>
    </ligand>
</feature>
<feature type="binding site" evidence="1">
    <location>
        <position position="888"/>
    </location>
    <ligand>
        <name>Zn(2+)</name>
        <dbReference type="ChEBI" id="CHEBI:29105"/>
    </ligand>
</feature>
<feature type="binding site" evidence="1">
    <location>
        <position position="890"/>
    </location>
    <ligand>
        <name>Zn(2+)</name>
        <dbReference type="ChEBI" id="CHEBI:29105"/>
    </ligand>
</feature>
<feature type="binding site" evidence="1">
    <location>
        <position position="899"/>
    </location>
    <ligand>
        <name>Zn(2+)</name>
        <dbReference type="ChEBI" id="CHEBI:29105"/>
    </ligand>
</feature>
<feature type="binding site" evidence="1">
    <location>
        <position position="900"/>
    </location>
    <ligand>
        <name>Zn(2+)</name>
        <dbReference type="ChEBI" id="CHEBI:29105"/>
    </ligand>
</feature>
<sequence length="904" mass="102436">MLIKLLTKVFGSRNDRTLRRMRKVVDLINRMEPEVEKLTNEELRAKTDEFRERLANGAVLETLIPEAFAVVREASKRVFGMRHFDVQLLGGMVLNERCIAEMRTGEGKTLTATLPAYLNALSGRGVHVVTVNDYLAQRDAENNRPLFEFLGLSVGINLPNMPAPAKRAAYAADITYGTNNEFGFDYLRDNMAFSPEERVQRKLHYALVDEVDSILIDEARTPLIISGPAEDSSEMYIRVNKLIPKLIRQEKEDSDTFQGEGHFSVDEKSRQVHLTERGLIKIEEMLVEAGIMEEGESLYSPANIMLMHHVTAALRAHVLFTRDVDYIVKDGEVIIVDEHTGRTMQGRRWSDGLHQAVEAKEGVEIQNENQTLASITFQNYFRLYEKLAGMTGTADTEAFEFSSIYKLDTIVVPTNRPMIRKDLADLVYMTEQEKIGAIIEDIRERTANGQPVLVGTISIEKSEVVSAELTKAGIEHKVLNAKFHAMEAEIVSQAGQPGAVTIATNMAGRGTDIVLGGSWQSEIALLENPTEDQIAAIKAAWQIRHDAVLASGGLHIIGTERHESRRIDNQLRGRAGRQGDAGSSRFYLSMEDALMRIFASDRVSGMMRKLGMKPGEAIEHPWVTKAIANAQRKVESRNFDIRKQLLEYDDVASDQRRAIYSQRNELLDVADVSETINSIREDVFKTVIDSYIPTQSLEEMWDVEGLEQRLKNDFDLDMPIAQWLEDEPQLHEETLRERILQLAIADYQRKEEVVGFDMMRNFEKGVMLQTLDSLWKEHLAAMDYLRQGIHLRGYAQKDPKQEYKRESFAMFAAMLESLKYEVISVLSKVQVRMPEEVEALEVQRREEAERLAKQQQLSHESDNSALMSQEEANVAASLERKVGRNDPCPCGSGKKYKQCHGRLQ</sequence>
<protein>
    <recommendedName>
        <fullName evidence="1">Protein translocase subunit SecA</fullName>
        <ecNumber evidence="1">7.4.2.8</ecNumber>
    </recommendedName>
</protein>